<feature type="chain" id="PRO_0000423063" description="Cyclic GMP-AMP synthase">
    <location>
        <begin position="1"/>
        <end position="495"/>
    </location>
</feature>
<feature type="region of interest" description="DNA-binding" evidence="2">
    <location>
        <begin position="1"/>
        <end position="134"/>
    </location>
</feature>
<feature type="region of interest" description="Disordered" evidence="3">
    <location>
        <begin position="1"/>
        <end position="128"/>
    </location>
</feature>
<feature type="region of interest" description="Required for association with the cell membrane" evidence="2">
    <location>
        <begin position="57"/>
        <end position="68"/>
    </location>
</feature>
<feature type="region of interest" description="Required for activation upon DNA viral infection" evidence="2">
    <location>
        <begin position="103"/>
        <end position="134"/>
    </location>
</feature>
<feature type="region of interest" description="DNA-binding" evidence="4">
    <location>
        <begin position="147"/>
        <end position="190"/>
    </location>
</feature>
<feature type="region of interest" description="Interaction with collided ribosomes" evidence="2">
    <location>
        <begin position="316"/>
        <end position="357"/>
    </location>
</feature>
<feature type="region of interest" description="DNA-binding" evidence="4">
    <location>
        <begin position="359"/>
        <end position="382"/>
    </location>
</feature>
<feature type="short sequence motif" description="Nuclear export signal" evidence="2">
    <location>
        <begin position="143"/>
        <end position="148"/>
    </location>
</feature>
<feature type="short sequence motif" description="Nuclear localization signal" evidence="2">
    <location>
        <begin position="268"/>
        <end position="278"/>
    </location>
</feature>
<feature type="compositionally biased region" description="Basic and acidic residues" evidence="3">
    <location>
        <begin position="52"/>
        <end position="76"/>
    </location>
</feature>
<feature type="compositionally biased region" description="Basic and acidic residues" evidence="3">
    <location>
        <begin position="105"/>
        <end position="116"/>
    </location>
</feature>
<feature type="binding site" evidence="4">
    <location>
        <position position="186"/>
    </location>
    <ligand>
        <name>GTP</name>
        <dbReference type="ChEBI" id="CHEBI:37565"/>
    </ligand>
</feature>
<feature type="binding site" evidence="4">
    <location>
        <position position="188"/>
    </location>
    <ligand>
        <name>ATP</name>
        <dbReference type="ChEBI" id="CHEBI:30616"/>
    </ligand>
</feature>
<feature type="binding site" evidence="4">
    <location>
        <position position="200"/>
    </location>
    <ligand>
        <name>Mg(2+)</name>
        <dbReference type="ChEBI" id="CHEBI:18420"/>
        <note>catalytic</note>
    </ligand>
</feature>
<feature type="binding site" evidence="2">
    <location>
        <position position="202"/>
    </location>
    <ligand>
        <name>2',3'-cGAMP</name>
        <dbReference type="ChEBI" id="CHEBI:143093"/>
    </ligand>
</feature>
<feature type="binding site" evidence="4">
    <location>
        <position position="202"/>
    </location>
    <ligand>
        <name>Mg(2+)</name>
        <dbReference type="ChEBI" id="CHEBI:18420"/>
        <note>catalytic</note>
    </ligand>
</feature>
<feature type="binding site" evidence="2">
    <location>
        <position position="294"/>
    </location>
    <ligand>
        <name>2',3'-cGAMP</name>
        <dbReference type="ChEBI" id="CHEBI:143093"/>
    </ligand>
</feature>
<feature type="binding site" evidence="4">
    <location>
        <position position="294"/>
    </location>
    <ligand>
        <name>GTP</name>
        <dbReference type="ChEBI" id="CHEBI:37565"/>
    </ligand>
</feature>
<feature type="binding site" evidence="4">
    <location>
        <position position="294"/>
    </location>
    <ligand>
        <name>Mg(2+)</name>
        <dbReference type="ChEBI" id="CHEBI:18420"/>
        <note>catalytic</note>
    </ligand>
</feature>
<feature type="binding site" evidence="2">
    <location>
        <position position="337"/>
    </location>
    <ligand>
        <name>2',3'-cGAMP</name>
        <dbReference type="ChEBI" id="CHEBI:143093"/>
    </ligand>
</feature>
<feature type="binding site" evidence="4">
    <location>
        <begin position="351"/>
        <end position="358"/>
    </location>
    <ligand>
        <name>GTP</name>
        <dbReference type="ChEBI" id="CHEBI:37565"/>
    </ligand>
</feature>
<feature type="binding site" evidence="2">
    <location>
        <position position="351"/>
    </location>
    <ligand>
        <name>2',3'-cGAMP</name>
        <dbReference type="ChEBI" id="CHEBI:143093"/>
    </ligand>
</feature>
<feature type="binding site" evidence="4">
    <location>
        <position position="358"/>
    </location>
    <ligand>
        <name>ATP</name>
        <dbReference type="ChEBI" id="CHEBI:30616"/>
    </ligand>
</feature>
<feature type="binding site" evidence="4">
    <location>
        <position position="365"/>
    </location>
    <ligand>
        <name>Zn(2+)</name>
        <dbReference type="ChEBI" id="CHEBI:29105"/>
    </ligand>
</feature>
<feature type="binding site" evidence="4">
    <location>
        <position position="371"/>
    </location>
    <ligand>
        <name>Zn(2+)</name>
        <dbReference type="ChEBI" id="CHEBI:29105"/>
    </ligand>
</feature>
<feature type="binding site" evidence="4">
    <location>
        <position position="372"/>
    </location>
    <ligand>
        <name>Zn(2+)</name>
        <dbReference type="ChEBI" id="CHEBI:29105"/>
    </ligand>
</feature>
<feature type="binding site" evidence="4">
    <location>
        <position position="379"/>
    </location>
    <ligand>
        <name>Zn(2+)</name>
        <dbReference type="ChEBI" id="CHEBI:29105"/>
    </ligand>
</feature>
<feature type="binding site" evidence="4">
    <location>
        <position position="389"/>
    </location>
    <ligand>
        <name>ATP</name>
        <dbReference type="ChEBI" id="CHEBI:30616"/>
    </ligand>
</feature>
<feature type="binding site" evidence="4">
    <location>
        <begin position="410"/>
        <end position="414"/>
    </location>
    <ligand>
        <name>ATP</name>
        <dbReference type="ChEBI" id="CHEBI:30616"/>
    </ligand>
</feature>
<feature type="site" description="Arginine-anchor" evidence="2">
    <location>
        <position position="230"/>
    </location>
</feature>
<feature type="site" description="Cleavage; by CASP3" evidence="2">
    <location>
        <begin position="294"/>
        <end position="295"/>
    </location>
</feature>
<feature type="modified residue" description="N6-acetyllysine" evidence="2">
    <location>
        <position position="7"/>
    </location>
</feature>
<feature type="modified residue" description="Phosphoserine" evidence="2">
    <location>
        <position position="13"/>
    </location>
</feature>
<feature type="modified residue" description="N6-acetyllysine" evidence="2">
    <location>
        <position position="56"/>
    </location>
</feature>
<feature type="modified residue" description="Phosphoserine" evidence="2">
    <location>
        <position position="57"/>
    </location>
</feature>
<feature type="modified residue" description="N6-lactoyllysine" evidence="1">
    <location>
        <position position="145"/>
    </location>
</feature>
<feature type="modified residue" description="PolyADP-ribosyl glutamic acid" evidence="1">
    <location>
        <position position="165"/>
    </location>
</feature>
<feature type="modified residue" description="Phosphoserine" evidence="2">
    <location>
        <position position="188"/>
    </location>
</feature>
<feature type="modified residue" description="Phosphotyrosine" evidence="2">
    <location>
        <position position="190"/>
    </location>
</feature>
<feature type="modified residue" description="5-glutamyl polyglutamate" evidence="1">
    <location>
        <position position="261"/>
    </location>
</feature>
<feature type="modified residue" description="Phosphoserine" evidence="2">
    <location>
        <position position="278"/>
    </location>
</feature>
<feature type="modified residue" description="N6-acetyllysine" evidence="2">
    <location>
        <position position="359"/>
    </location>
</feature>
<feature type="modified residue" description="N6-acetyllysine" evidence="2">
    <location>
        <position position="369"/>
    </location>
</feature>
<feature type="modified residue" description="N6-acetyllysine" evidence="2">
    <location>
        <position position="389"/>
    </location>
</feature>
<feature type="modified residue" description="Phosphoserine" evidence="2">
    <location>
        <position position="410"/>
    </location>
</feature>
<feature type="modified residue" description="N6-methyllysine" evidence="2">
    <location>
        <position position="481"/>
    </location>
</feature>
<feature type="lipid moiety-binding region" description="S-palmitoyl cysteine" evidence="2">
    <location>
        <position position="379"/>
    </location>
</feature>
<feature type="lipid moiety-binding region" description="S-palmitoyl cysteine" evidence="2">
    <location>
        <position position="380"/>
    </location>
</feature>
<feature type="lipid moiety-binding region" description="S-palmitoyl cysteine" evidence="2">
    <location>
        <position position="449"/>
    </location>
</feature>
<feature type="cross-link" description="Glycyl lysine isopeptide (Lys-Gly) (interchain with G-Cter in SUMO)" evidence="1">
    <location>
        <position position="206"/>
    </location>
</feature>
<feature type="cross-link" description="Glycyl lysine isopeptide (Lys-Gly) (interchain with G-Cter in ubiquitin)" evidence="1">
    <location>
        <position position="260"/>
    </location>
</feature>
<feature type="cross-link" description="Glycyl lysine isopeptide (Lys-Gly) (interchain with G-Cter in SUMO); alternate" evidence="1">
    <location>
        <position position="322"/>
    </location>
</feature>
<feature type="cross-link" description="Glycyl lysine isopeptide (Lys-Gly) (interchain with G-Cter in ubiquitin); alternate" evidence="1">
    <location>
        <position position="322"/>
    </location>
</feature>
<feature type="cross-link" description="Glycyl lysine isopeptide (Lys-Gly) (interchain with G-Cter in SUMO); alternate" evidence="1">
    <location>
        <position position="359"/>
    </location>
</feature>
<feature type="cross-link" description="Glycyl lysine isopeptide (Lys-Gly) (interchain with G-Cter in ubiquitin); alternate" evidence="2">
    <location>
        <position position="359"/>
    </location>
</feature>
<feature type="cross-link" description="Glycyl lysine isopeptide (Lys-Gly) (interchain with G-Cter in SUMO)" evidence="1">
    <location>
        <position position="369"/>
    </location>
</feature>
<feature type="cross-link" description="Glycyl lysine isopeptide (Lys-Gly) (interchain with G-Cter in ubiquitin)" evidence="2">
    <location>
        <position position="386"/>
    </location>
</feature>
<feature type="cross-link" description="Glycyl lysine isopeptide (Lys-Gly) (interchain with G-Cter in ubiquitin)" evidence="2">
    <location>
        <position position="389"/>
    </location>
</feature>
<feature type="cross-link" description="Glycyl lysine isopeptide (Lys-Gly) (interchain with G-Cter in ubiquitin)" evidence="1">
    <location>
        <position position="396"/>
    </location>
</feature>
<feature type="cross-link" description="Glycyl lysine isopeptide (Lys-Gly) (interchain with G-Cter in ubiquitin)" evidence="1">
    <location>
        <position position="397"/>
    </location>
</feature>
<feature type="mutagenesis site" description="Abolishes enzyme activity and stimulation of interferon production; when associated with N-202." evidence="4">
    <original>E</original>
    <variation>Q</variation>
    <location>
        <position position="200"/>
    </location>
</feature>
<feature type="mutagenesis site" description="Abolishes enzyme activity and stimulation of interferon production; when associated with Q-200." evidence="4">
    <original>D</original>
    <variation>N</variation>
    <location>
        <position position="202"/>
    </location>
</feature>
<feature type="helix" evidence="7">
    <location>
        <begin position="139"/>
        <end position="147"/>
    </location>
</feature>
<feature type="helix" evidence="7">
    <location>
        <begin position="150"/>
        <end position="173"/>
    </location>
</feature>
<feature type="turn" evidence="7">
    <location>
        <begin position="177"/>
        <end position="180"/>
    </location>
</feature>
<feature type="strand" evidence="7">
    <location>
        <begin position="182"/>
        <end position="184"/>
    </location>
</feature>
<feature type="turn" evidence="8">
    <location>
        <begin position="188"/>
        <end position="192"/>
    </location>
</feature>
<feature type="strand" evidence="7">
    <location>
        <begin position="200"/>
        <end position="208"/>
    </location>
</feature>
<feature type="strand" evidence="7">
    <location>
        <begin position="213"/>
        <end position="217"/>
    </location>
</feature>
<feature type="strand" evidence="7">
    <location>
        <begin position="221"/>
        <end position="227"/>
    </location>
</feature>
<feature type="helix" evidence="7">
    <location>
        <begin position="238"/>
        <end position="240"/>
    </location>
</feature>
<feature type="helix" evidence="7">
    <location>
        <begin position="248"/>
        <end position="262"/>
    </location>
</feature>
<feature type="strand" evidence="7">
    <location>
        <begin position="269"/>
        <end position="271"/>
    </location>
</feature>
<feature type="strand" evidence="7">
    <location>
        <begin position="281"/>
        <end position="285"/>
    </location>
</feature>
<feature type="strand" evidence="7">
    <location>
        <begin position="287"/>
        <end position="289"/>
    </location>
</feature>
<feature type="strand" evidence="7">
    <location>
        <begin position="291"/>
        <end position="301"/>
    </location>
</feature>
<feature type="helix" evidence="7">
    <location>
        <begin position="307"/>
        <end position="309"/>
    </location>
</feature>
<feature type="turn" evidence="7">
    <location>
        <begin position="316"/>
        <end position="319"/>
    </location>
</feature>
<feature type="helix" evidence="7">
    <location>
        <begin position="321"/>
        <end position="328"/>
    </location>
</feature>
<feature type="strand" evidence="7">
    <location>
        <begin position="332"/>
        <end position="335"/>
    </location>
</feature>
<feature type="strand" evidence="8">
    <location>
        <begin position="339"/>
        <end position="344"/>
    </location>
</feature>
<feature type="helix" evidence="7">
    <location>
        <begin position="346"/>
        <end position="348"/>
    </location>
</feature>
<feature type="strand" evidence="7">
    <location>
        <begin position="350"/>
        <end position="353"/>
    </location>
</feature>
<feature type="helix" evidence="7">
    <location>
        <begin position="355"/>
        <end position="363"/>
    </location>
</feature>
<feature type="strand" evidence="8">
    <location>
        <begin position="366"/>
        <end position="368"/>
    </location>
</feature>
<feature type="turn" evidence="7">
    <location>
        <begin position="369"/>
        <end position="372"/>
    </location>
</feature>
<feature type="helix" evidence="7">
    <location>
        <begin position="381"/>
        <end position="398"/>
    </location>
</feature>
<feature type="turn" evidence="7">
    <location>
        <begin position="399"/>
        <end position="401"/>
    </location>
</feature>
<feature type="turn" evidence="7">
    <location>
        <begin position="404"/>
        <end position="407"/>
    </location>
</feature>
<feature type="helix" evidence="7">
    <location>
        <begin position="410"/>
        <end position="423"/>
    </location>
</feature>
<feature type="helix" evidence="7">
    <location>
        <begin position="427"/>
        <end position="429"/>
    </location>
</feature>
<feature type="helix" evidence="7">
    <location>
        <begin position="432"/>
        <end position="434"/>
    </location>
</feature>
<feature type="helix" evidence="7">
    <location>
        <begin position="435"/>
        <end position="452"/>
    </location>
</feature>
<feature type="turn" evidence="7">
    <location>
        <begin position="468"/>
        <end position="470"/>
    </location>
</feature>
<feature type="helix" evidence="7">
    <location>
        <begin position="473"/>
        <end position="488"/>
    </location>
</feature>
<feature type="helix" evidence="7">
    <location>
        <begin position="492"/>
        <end position="494"/>
    </location>
</feature>
<dbReference type="EC" id="2.7.7.86" evidence="4"/>
<dbReference type="EMBL" id="FP102323">
    <property type="status" value="NOT_ANNOTATED_CDS"/>
    <property type="molecule type" value="Genomic_DNA"/>
</dbReference>
<dbReference type="RefSeq" id="XP_013840602.1">
    <property type="nucleotide sequence ID" value="XM_013985148.1"/>
</dbReference>
<dbReference type="PDB" id="4JLX">
    <property type="method" value="X-ray"/>
    <property type="resolution" value="2.00 A"/>
    <property type="chains" value="A=135-495"/>
</dbReference>
<dbReference type="PDB" id="4JLZ">
    <property type="method" value="X-ray"/>
    <property type="resolution" value="2.27 A"/>
    <property type="chains" value="A/B=135-495"/>
</dbReference>
<dbReference type="PDB" id="4KB6">
    <property type="method" value="X-ray"/>
    <property type="resolution" value="3.08 A"/>
    <property type="chains" value="A=135-495"/>
</dbReference>
<dbReference type="PDBsum" id="4JLX"/>
<dbReference type="PDBsum" id="4JLZ"/>
<dbReference type="PDBsum" id="4KB6"/>
<dbReference type="SMR" id="I3LM39"/>
<dbReference type="FunCoup" id="I3LM39">
    <property type="interactions" value="313"/>
</dbReference>
<dbReference type="STRING" id="9823.ENSSSCP00000025159"/>
<dbReference type="PaxDb" id="9823-ENSSSCP00000025159"/>
<dbReference type="PeptideAtlas" id="I3LM39"/>
<dbReference type="Ensembl" id="ENSSSCT00000030573.4">
    <property type="protein sequence ID" value="ENSSSCP00000025159.1"/>
    <property type="gene ID" value="ENSSSCG00000021383.4"/>
</dbReference>
<dbReference type="Ensembl" id="ENSSSCT00015028332.1">
    <property type="protein sequence ID" value="ENSSSCP00015011100.1"/>
    <property type="gene ID" value="ENSSSCG00015021453.1"/>
</dbReference>
<dbReference type="Ensembl" id="ENSSSCT00025037600.1">
    <property type="protein sequence ID" value="ENSSSCP00025015781.1"/>
    <property type="gene ID" value="ENSSSCG00025027757.1"/>
</dbReference>
<dbReference type="Ensembl" id="ENSSSCT00030086223.1">
    <property type="protein sequence ID" value="ENSSSCP00030039757.1"/>
    <property type="gene ID" value="ENSSSCG00030061695.1"/>
</dbReference>
<dbReference type="Ensembl" id="ENSSSCT00035063373.1">
    <property type="protein sequence ID" value="ENSSSCP00035025648.1"/>
    <property type="gene ID" value="ENSSSCG00035047597.1"/>
</dbReference>
<dbReference type="Ensembl" id="ENSSSCT00040088529.1">
    <property type="protein sequence ID" value="ENSSSCP00040038910.1"/>
    <property type="gene ID" value="ENSSSCG00040064832.1"/>
</dbReference>
<dbReference type="Ensembl" id="ENSSSCT00045053754.1">
    <property type="protein sequence ID" value="ENSSSCP00045037382.1"/>
    <property type="gene ID" value="ENSSSCG00045031514.1"/>
</dbReference>
<dbReference type="Ensembl" id="ENSSSCT00050013192.1">
    <property type="protein sequence ID" value="ENSSSCP00050005463.1"/>
    <property type="gene ID" value="ENSSSCG00050009802.1"/>
</dbReference>
<dbReference type="Ensembl" id="ENSSSCT00055053600.1">
    <property type="protein sequence ID" value="ENSSSCP00055042758.1"/>
    <property type="gene ID" value="ENSSSCG00055027117.1"/>
</dbReference>
<dbReference type="Ensembl" id="ENSSSCT00060037939.1">
    <property type="protein sequence ID" value="ENSSSCP00060016133.1"/>
    <property type="gene ID" value="ENSSSCG00060028039.1"/>
</dbReference>
<dbReference type="Ensembl" id="ENSSSCT00065057000.1">
    <property type="protein sequence ID" value="ENSSSCP00065024791.1"/>
    <property type="gene ID" value="ENSSSCG00065041662.1"/>
</dbReference>
<dbReference type="Ensembl" id="ENSSSCT00085044571">
    <property type="protein sequence ID" value="ENSSSCP00085031146"/>
    <property type="gene ID" value="ENSSSCG00085023227"/>
</dbReference>
<dbReference type="Ensembl" id="ENSSSCT00090052491">
    <property type="protein sequence ID" value="ENSSSCP00090032743"/>
    <property type="gene ID" value="ENSSSCG00090029623"/>
</dbReference>
<dbReference type="Ensembl" id="ENSSSCT00105018865">
    <property type="protein sequence ID" value="ENSSSCP00105013360"/>
    <property type="gene ID" value="ENSSSCG00105009575"/>
</dbReference>
<dbReference type="Ensembl" id="ENSSSCT00110002299">
    <property type="protein sequence ID" value="ENSSSCP00110001770"/>
    <property type="gene ID" value="ENSSSCG00110001171"/>
</dbReference>
<dbReference type="Ensembl" id="ENSSSCT00130061446">
    <property type="protein sequence ID" value="ENSSSCP00130044017"/>
    <property type="gene ID" value="ENSSSCG00130031506"/>
</dbReference>
<dbReference type="GeneID" id="100516408"/>
<dbReference type="KEGG" id="ssc:100516408"/>
<dbReference type="CTD" id="115004"/>
<dbReference type="VGNC" id="VGNC:86614">
    <property type="gene designation" value="CGAS"/>
</dbReference>
<dbReference type="eggNOG" id="KOG3963">
    <property type="taxonomic scope" value="Eukaryota"/>
</dbReference>
<dbReference type="GeneTree" id="ENSGT01050000244827"/>
<dbReference type="HOGENOM" id="CLU_040428_2_0_1"/>
<dbReference type="InParanoid" id="I3LM39"/>
<dbReference type="OMA" id="EKTCCER"/>
<dbReference type="OrthoDB" id="6054650at2759"/>
<dbReference type="TreeFam" id="TF331255"/>
<dbReference type="BRENDA" id="2.7.7.86">
    <property type="organism ID" value="6170"/>
</dbReference>
<dbReference type="EvolutionaryTrace" id="I3LM39"/>
<dbReference type="Proteomes" id="UP000008227">
    <property type="component" value="Chromosome 1"/>
</dbReference>
<dbReference type="Proteomes" id="UP000314985">
    <property type="component" value="Unplaced"/>
</dbReference>
<dbReference type="Proteomes" id="UP000694570">
    <property type="component" value="Unplaced"/>
</dbReference>
<dbReference type="Proteomes" id="UP000694571">
    <property type="component" value="Unplaced"/>
</dbReference>
<dbReference type="Proteomes" id="UP000694720">
    <property type="component" value="Unplaced"/>
</dbReference>
<dbReference type="Proteomes" id="UP000694722">
    <property type="component" value="Unplaced"/>
</dbReference>
<dbReference type="Proteomes" id="UP000694723">
    <property type="component" value="Unplaced"/>
</dbReference>
<dbReference type="Proteomes" id="UP000694724">
    <property type="component" value="Unplaced"/>
</dbReference>
<dbReference type="Proteomes" id="UP000694725">
    <property type="component" value="Unplaced"/>
</dbReference>
<dbReference type="Proteomes" id="UP000694726">
    <property type="component" value="Unplaced"/>
</dbReference>
<dbReference type="Proteomes" id="UP000694727">
    <property type="component" value="Unplaced"/>
</dbReference>
<dbReference type="Proteomes" id="UP000694728">
    <property type="component" value="Unplaced"/>
</dbReference>
<dbReference type="Bgee" id="ENSSSCG00000021383">
    <property type="expression patterns" value="Expressed in tonsil and 29 other cell types or tissues"/>
</dbReference>
<dbReference type="GO" id="GO:0005829">
    <property type="term" value="C:cytosol"/>
    <property type="evidence" value="ECO:0000250"/>
    <property type="project" value="UniProtKB"/>
</dbReference>
<dbReference type="GO" id="GO:0016604">
    <property type="term" value="C:nuclear body"/>
    <property type="evidence" value="ECO:0007669"/>
    <property type="project" value="Ensembl"/>
</dbReference>
<dbReference type="GO" id="GO:0005634">
    <property type="term" value="C:nucleus"/>
    <property type="evidence" value="ECO:0000250"/>
    <property type="project" value="UniProtKB"/>
</dbReference>
<dbReference type="GO" id="GO:0005886">
    <property type="term" value="C:plasma membrane"/>
    <property type="evidence" value="ECO:0000250"/>
    <property type="project" value="UniProtKB"/>
</dbReference>
<dbReference type="GO" id="GO:0035861">
    <property type="term" value="C:site of double-strand break"/>
    <property type="evidence" value="ECO:0000250"/>
    <property type="project" value="UniProtKB"/>
</dbReference>
<dbReference type="GO" id="GO:0061501">
    <property type="term" value="F:2',3'-cyclic GMP-AMP synthase activity"/>
    <property type="evidence" value="ECO:0000250"/>
    <property type="project" value="UniProtKB"/>
</dbReference>
<dbReference type="GO" id="GO:0005524">
    <property type="term" value="F:ATP binding"/>
    <property type="evidence" value="ECO:0007669"/>
    <property type="project" value="UniProtKB-KW"/>
</dbReference>
<dbReference type="GO" id="GO:0003682">
    <property type="term" value="F:chromatin binding"/>
    <property type="evidence" value="ECO:0000250"/>
    <property type="project" value="UniProtKB"/>
</dbReference>
<dbReference type="GO" id="GO:0003677">
    <property type="term" value="F:DNA binding"/>
    <property type="evidence" value="ECO:0000250"/>
    <property type="project" value="UniProtKB"/>
</dbReference>
<dbReference type="GO" id="GO:0003690">
    <property type="term" value="F:double-stranded DNA binding"/>
    <property type="evidence" value="ECO:0000250"/>
    <property type="project" value="UniProtKB"/>
</dbReference>
<dbReference type="GO" id="GO:0005525">
    <property type="term" value="F:GTP binding"/>
    <property type="evidence" value="ECO:0007669"/>
    <property type="project" value="UniProtKB-KW"/>
</dbReference>
<dbReference type="GO" id="GO:0046872">
    <property type="term" value="F:metal ion binding"/>
    <property type="evidence" value="ECO:0007669"/>
    <property type="project" value="UniProtKB-KW"/>
</dbReference>
<dbReference type="GO" id="GO:0140693">
    <property type="term" value="F:molecular condensate scaffold activity"/>
    <property type="evidence" value="ECO:0000250"/>
    <property type="project" value="UniProtKB"/>
</dbReference>
<dbReference type="GO" id="GO:0031491">
    <property type="term" value="F:nucleosome binding"/>
    <property type="evidence" value="ECO:0000250"/>
    <property type="project" value="UniProtKB"/>
</dbReference>
<dbReference type="GO" id="GO:0005546">
    <property type="term" value="F:phosphatidylinositol-4,5-bisphosphate binding"/>
    <property type="evidence" value="ECO:0000250"/>
    <property type="project" value="UniProtKB"/>
</dbReference>
<dbReference type="GO" id="GO:0160004">
    <property type="term" value="F:poly-ADP-D-ribose modification-dependent protein binding"/>
    <property type="evidence" value="ECO:0000250"/>
    <property type="project" value="UniProtKB"/>
</dbReference>
<dbReference type="GO" id="GO:0042803">
    <property type="term" value="F:protein homodimerization activity"/>
    <property type="evidence" value="ECO:0000250"/>
    <property type="project" value="UniProtKB"/>
</dbReference>
<dbReference type="GO" id="GO:0002218">
    <property type="term" value="P:activation of innate immune response"/>
    <property type="evidence" value="ECO:0000250"/>
    <property type="project" value="UniProtKB"/>
</dbReference>
<dbReference type="GO" id="GO:0019933">
    <property type="term" value="P:cAMP-mediated signaling"/>
    <property type="evidence" value="ECO:0000250"/>
    <property type="project" value="UniProtKB"/>
</dbReference>
<dbReference type="GO" id="GO:0071360">
    <property type="term" value="P:cellular response to exogenous dsRNA"/>
    <property type="evidence" value="ECO:0000318"/>
    <property type="project" value="GO_Central"/>
</dbReference>
<dbReference type="GO" id="GO:0140896">
    <property type="term" value="P:cGAS/STING signaling pathway"/>
    <property type="evidence" value="ECO:0007669"/>
    <property type="project" value="Ensembl"/>
</dbReference>
<dbReference type="GO" id="GO:0019934">
    <property type="term" value="P:cGMP-mediated signaling"/>
    <property type="evidence" value="ECO:0007669"/>
    <property type="project" value="Ensembl"/>
</dbReference>
<dbReference type="GO" id="GO:0051607">
    <property type="term" value="P:defense response to virus"/>
    <property type="evidence" value="ECO:0000250"/>
    <property type="project" value="UniProtKB"/>
</dbReference>
<dbReference type="GO" id="GO:0006974">
    <property type="term" value="P:DNA damage response"/>
    <property type="evidence" value="ECO:0000250"/>
    <property type="project" value="UniProtKB"/>
</dbReference>
<dbReference type="GO" id="GO:0006281">
    <property type="term" value="P:DNA repair"/>
    <property type="evidence" value="ECO:0007669"/>
    <property type="project" value="UniProtKB-KW"/>
</dbReference>
<dbReference type="GO" id="GO:0045087">
    <property type="term" value="P:innate immune response"/>
    <property type="evidence" value="ECO:0007669"/>
    <property type="project" value="UniProtKB-KW"/>
</dbReference>
<dbReference type="GO" id="GO:0160049">
    <property type="term" value="P:negative regulation of cGAS/STING signaling pathway"/>
    <property type="evidence" value="ECO:0007669"/>
    <property type="project" value="Ensembl"/>
</dbReference>
<dbReference type="GO" id="GO:2000042">
    <property type="term" value="P:negative regulation of double-strand break repair via homologous recombination"/>
    <property type="evidence" value="ECO:0000250"/>
    <property type="project" value="UniProtKB"/>
</dbReference>
<dbReference type="GO" id="GO:0038001">
    <property type="term" value="P:paracrine signaling"/>
    <property type="evidence" value="ECO:0000250"/>
    <property type="project" value="UniProtKB"/>
</dbReference>
<dbReference type="GO" id="GO:2000774">
    <property type="term" value="P:positive regulation of cellular senescence"/>
    <property type="evidence" value="ECO:0000250"/>
    <property type="project" value="UniProtKB"/>
</dbReference>
<dbReference type="GO" id="GO:0002230">
    <property type="term" value="P:positive regulation of defense response to virus by host"/>
    <property type="evidence" value="ECO:0000250"/>
    <property type="project" value="UniProtKB"/>
</dbReference>
<dbReference type="GO" id="GO:0032481">
    <property type="term" value="P:positive regulation of type I interferon production"/>
    <property type="evidence" value="ECO:0000250"/>
    <property type="project" value="UniProtKB"/>
</dbReference>
<dbReference type="FunFam" id="1.10.1410.40:FF:000007">
    <property type="entry name" value="Cyclic GMP-AMP synthase"/>
    <property type="match status" value="1"/>
</dbReference>
<dbReference type="FunFam" id="3.30.460.90:FF:000005">
    <property type="entry name" value="Cyclic GMP-AMP synthase"/>
    <property type="match status" value="1"/>
</dbReference>
<dbReference type="Gene3D" id="1.10.1410.40">
    <property type="match status" value="1"/>
</dbReference>
<dbReference type="Gene3D" id="3.30.460.90">
    <property type="match status" value="1"/>
</dbReference>
<dbReference type="InterPro" id="IPR046903">
    <property type="entry name" value="Mab-21-like_nuc_Trfase"/>
</dbReference>
<dbReference type="InterPro" id="IPR046906">
    <property type="entry name" value="Mab-21_HhH/H2TH-like"/>
</dbReference>
<dbReference type="InterPro" id="IPR024810">
    <property type="entry name" value="MAB21L/cGLR"/>
</dbReference>
<dbReference type="PANTHER" id="PTHR10656">
    <property type="entry name" value="CELL FATE DETERMINING PROTEIN MAB21-RELATED"/>
    <property type="match status" value="1"/>
</dbReference>
<dbReference type="PANTHER" id="PTHR10656:SF35">
    <property type="entry name" value="CYCLIC GMP-AMP SYNTHASE"/>
    <property type="match status" value="1"/>
</dbReference>
<dbReference type="Pfam" id="PF03281">
    <property type="entry name" value="Mab-21"/>
    <property type="match status" value="1"/>
</dbReference>
<dbReference type="Pfam" id="PF20266">
    <property type="entry name" value="Mab-21_C"/>
    <property type="match status" value="1"/>
</dbReference>
<dbReference type="SMART" id="SM01265">
    <property type="entry name" value="Mab-21"/>
    <property type="match status" value="1"/>
</dbReference>
<sequence>MAARRGKSTRTASEVGAAGPRASARSVNGAPTVPEAARPGARRNGPSRASGCRREKSGPDPREKPQVRTRTARAEDQAEGPSAPSERVEPPSAQGASLLRAGSCRAREARSARELRPQAGATELAAPARMEAPPGAWKLQTVLEKVRLSRHEISEAAEVVNWVVEHLLRRLQGGESEFKGVALLRTGSYYERVKISAPNEFDVMFKLEVPRIQLEEYCNSGAHYFVKFKRNPGGNPLEQFLEKEILSASKMLSKFRKIIKEEIKNIEGVTVERKRRGSPAVTLLISKPKEISVDIILALESKSSWPASTQKGLPISQWLGAKVKNNLKRQPFYLVPKHAKEGSGFQEETWRLSFSHIEKDILKNHGQSKTCCEIDGVKCCRKECLKLMKYLLEQLKKKFGNRRELAKFCSYHVKTAFFHVCTQDPHDNQWHLKNLECCFDNCVAYFLQCLKTEQLANYFIPGVNLFSRDLIDKPSKEFLSKQIEYERNNGFPVFW</sequence>
<comment type="function">
    <text evidence="1 2 4">Nucleotidyltransferase that catalyzes the formation of cyclic GMP-AMP (2',3'-cGAMP) from ATP and GTP and plays a key role in innate immunity (PubMed:23722159). Catalysis involves both the formation of a 2',5' phosphodiester linkage at the GpA step and the formation of a 3',5' phosphodiester linkage at the ApG step, producing c[G(2',5')pA(3',5')p] (PubMed:23722159). Acts as a key DNA sensor: directly binds double-stranded DNA (dsDNA), inducing the formation of liquid-like droplets in which CGAS is activated, leading to synthesis of 2',3'-cGAMP, a second messenger that binds to and activates STING1, thereby triggering type-I interferon production. Preferentially binds long dsDNA (around 45 bp) and forms ladder-like networks that function cooperatively to stabilize individual cGAS-dsDNA complexes. Acts as a key foreign DNA sensor, the presence of double-stranded DNA (dsDNA) in the cytoplasm being a danger signal that triggers the immune responses. Has antiviral activity by sensing the presence of dsDNA from DNA viruses in the cytoplasm. Also acts as an innate immune sensor of infection by retroviruses by detecting the presence of reverse-transcribed DNA in the cytosol (By similarity). Detection of retroviral reverse-transcribed DNA in the cytosol may be indirect and be mediated via interaction with PQBP1, which directly binds reverse-transcribed retroviral DNA. Also detects the presence of DNA from bacteria (By similarity). 2',3'-cGAMP can be transferred from producing cells to neighboring cells through gap junctions, leading to promote STING1 activation and convey immune response to connecting cells. 2',3'-cGAMP can also be transferred between cells by virtue of packaging within viral particles contributing to IFN-induction in newly infected cells in a cGAS-independent but STING1-dependent manner. Also senses the presence of neutrophil extracellular traps (NETs) that are translocated to the cytosol following phagocytosis, leading to synthesis of 2',3'-cGAMP (By similarity). In addition to foreign DNA, can also be activated by endogenous nuclear or mitochondrial DNA (By similarity). When self-DNA leaks into the cytosol during cellular stress (such as mitochondrial stress, DNA damage, mitotic arrest or senescence), or is present in form of cytosolic micronuclei, CGAS is activated leading to a state of sterile inflammation. Acts as a regulator of cellular senescence by binding to cytosolic chromatin fragments that are present in senescent cells, leading to trigger type-I interferon production via STING1 and promote cellular senescence. Also involved in the inflammatory response to genome instability and double-stranded DNA breaks: acts by localizing to micronuclei arising from genome instability. Micronuclei, which are frequently found in cancer cells, consist of chromatin surrounded by their own nuclear membrane: following breakdown of the micronuclear envelope, a process associated with chromothripsis, CGAS binds self-DNA exposed to the cytosol, leading to 2',3'-cGAMP synthesis and subsequent activation of STING1 and type-I interferon production (By similarity). In a healthy cell, CGAS is however kept inactive even in cellular events that directly expose it to self-DNA, such as mitosis, when cGAS associates with chromatin directly after nuclear envelope breakdown or remains in the form of postmitotic persistent nuclear cGAS pools bound to chromatin (By similarity). Nuclear CGAS is inactivated by chromatin via direct interaction with nucleosomes, which block CGAS from DNA binding and thus prevent CGAS-induced autoimmunity. Also acts as a suppressor of DNA repair in response to DNA damage: inhibits homologous recombination repair by interacting with PARP1, the CGAS-PARP1 interaction leading to impede the formation of the PARP1-TIMELESS complex (By similarity). In addition to DNA, also sense translation stress: in response to translation stress, translocates to the cytosol and associates with collided ribosomes, promoting its activation and triggering type-I interferon production (By similarity).</text>
</comment>
<comment type="catalytic activity">
    <reaction evidence="4">
        <text>GTP + ATP = 2',3'-cGAMP + 2 diphosphate</text>
        <dbReference type="Rhea" id="RHEA:42064"/>
        <dbReference type="ChEBI" id="CHEBI:30616"/>
        <dbReference type="ChEBI" id="CHEBI:33019"/>
        <dbReference type="ChEBI" id="CHEBI:37565"/>
        <dbReference type="ChEBI" id="CHEBI:143093"/>
        <dbReference type="EC" id="2.7.7.86"/>
    </reaction>
    <physiologicalReaction direction="left-to-right" evidence="4">
        <dbReference type="Rhea" id="RHEA:42065"/>
    </physiologicalReaction>
</comment>
<comment type="catalytic activity">
    <reaction evidence="6">
        <text>GTP + ATP = pppGp(2'-5')A + diphosphate</text>
        <dbReference type="Rhea" id="RHEA:23748"/>
        <dbReference type="ChEBI" id="CHEBI:30616"/>
        <dbReference type="ChEBI" id="CHEBI:33019"/>
        <dbReference type="ChEBI" id="CHEBI:37565"/>
        <dbReference type="ChEBI" id="CHEBI:78318"/>
    </reaction>
    <physiologicalReaction direction="left-to-right" evidence="6">
        <dbReference type="Rhea" id="RHEA:23749"/>
    </physiologicalReaction>
</comment>
<comment type="catalytic activity">
    <reaction evidence="6">
        <text>pppGp(2'-5')A = 2',3'-cGAMP + diphosphate</text>
        <dbReference type="Rhea" id="RHEA:23924"/>
        <dbReference type="ChEBI" id="CHEBI:33019"/>
        <dbReference type="ChEBI" id="CHEBI:78318"/>
        <dbReference type="ChEBI" id="CHEBI:143093"/>
    </reaction>
    <physiologicalReaction direction="left-to-right" evidence="6">
        <dbReference type="Rhea" id="RHEA:23925"/>
    </physiologicalReaction>
</comment>
<comment type="cofactor">
    <cofactor evidence="4">
        <name>Mg(2+)</name>
        <dbReference type="ChEBI" id="CHEBI:18420"/>
    </cofactor>
    <cofactor evidence="1">
        <name>Mn(2+)</name>
        <dbReference type="ChEBI" id="CHEBI:29035"/>
    </cofactor>
    <text evidence="1 4">Binds 1 Mg(2+) per subunit (PubMed:23722159). Is also active with Mn(2+) (By similarity). Mn(2+)-activated enzyme forms an inverted pppGp(2'-5')A intermediate, suggesting a non-canonical but accelerated 2',3'-cGAMP cyclization without substrate flip-over. Mn(2+) ions are coordinated by triphosphate moiety of the inverted substrate, independent of the catalytic triad residues (By similarity).</text>
</comment>
<comment type="cofactor">
    <cofactor evidence="1">
        <name>Zn(2+)</name>
        <dbReference type="ChEBI" id="CHEBI:29105"/>
    </cofactor>
    <text evidence="2">Undergoes a liquid-like phase transition after binding to DNA, which is dependent on zinc.</text>
</comment>
<comment type="activity regulation">
    <text evidence="1 2 4">The enzyme activity is strongly increased by double-stranded DNA (dsDNA), but not by single-stranded DNA or RNA (PubMed:23722159). DNA-binding induces the formation of liquid-like droplets in which CGAS is activated. Liquid-like droplets also create a selective environment that restricts entry of negative regulators, such as TREX1 or BANF1/BAF, allowing sensing of DNA (By similarity). A number of mechanisms exist to restrict its activity toward self-DNA. The nucleotidyltransferase activity is inhibited in the nucleus via its association with nucleosomes: interacts with the acidic patch of histones H2A and H2B, thereby blocking DNA-binding and subsequent activation (By similarity). CGAS is also inactive when associated with mitotic chromatin (By similarity). Chromatin-bound CGAS cannot be activated by exogenous DNA in mitotic cells: phosphorylation of the N-terminal disordered part by AURKB during the G2-M transition blocks CGAS liquid phase separation and activation (By similarity). Activity toward self-DNA is inhibited by BANF1/BAF upon acute loss of nuclear membrane integrity: BANF1/BAF acts by outcompeting CGAS for DNA-binding, thereby preventing CGAS activation (By similarity). DNA-induced activation at micronuclei is also limited by TREX1, which degrades micronuclear DNA upon nuclear envelope rupture, thereby preventing CGAS activation. CGAS can be released from nucleosomes and activated by MRE11 component of the MRN complex, which displaces CGAS from acidic-patch-mediated sequestration (By similarity). Acetylation at Lys-359, Lys-369 and Lys-389 inhibits the cyclic GMP-AMP synthase activity. Acetylation by KAT5 increases the cyclic GMP-AMP synthase activity by promoting DNA-binding and subsequent activation (By similarity). Phosphorylation at Ser-278 suppresses the nucleotidyltransferase activity. Phosphorylation at Ser-410 promotes the cyclic GMP-AMP synthase activity (By similarity). Phosphorylation at Ser-188 inhibits its cyclic GMP-AMP synthase activity. Ubiquitination at Lys-359 via 'Lys-27'-linked polyubiquitination enhances the cyclic GMP-AMP synthase activity (By similarity). Monoubiquitination at Lys-322 promotes oligomerization and subsequent activation. Sumoylation at Lys-322, Lys-359 and Lys-369 prevents DNA-binding, oligomerization and nucleotidyltransferase activity. The enzyme activity is impaired by the cleavage by CASP1 (By similarity). In addition to DNA, also activated by collided ribosomes upon translation stress: specifically binds collided ribosomes, promoting its activation and triggering type-I interferon production (By similarity).</text>
</comment>
<comment type="subunit">
    <text evidence="1 2">Monomer in the absence of DNA. Homodimer in presence of dsDNA: forms a 2:2 dimer with two enzymes binding to two DNA molecules. Interacts with nucleosomes; interaction is mainly mediated via histones H2A and H2B and inactivates the nucleotidyltransferase activity by blocking DNA-binding and subsequent activation. Interacts with PQBP1 (via WW domain). Interacts with TRIM14; this interaction recruits USP14, leading to deubiquitinate and stabilize CGAS and promote type I interferon production. Interacts with ZCCHC3; promoting sensing of dsDNA by CGAS. Interacts (when not monomethylated) with (poly-ADP-ribosylated) PARP1; interaction takes place in the nucleus and prevents the formation of the PARP1-TIMELESS complex (By similarity). Interacts (when monomethylated) with SGF29; interaction with SGF29 prevents interaction with PARP1. Interacts with PCBP2; preventing the formation of liquid-like droplets in which CGAS is activated (By similarity). Interacts with IRGM; promoting CGAS degradation (By similarity).</text>
</comment>
<comment type="subcellular location">
    <subcellularLocation>
        <location evidence="1">Nucleus</location>
    </subcellularLocation>
    <subcellularLocation>
        <location evidence="1">Chromosome</location>
    </subcellularLocation>
    <subcellularLocation>
        <location evidence="1">Cell membrane</location>
        <topology evidence="1">Peripheral membrane protein</topology>
    </subcellularLocation>
    <subcellularLocation>
        <location evidence="1">Cytoplasm</location>
        <location evidence="1">Cytosol</location>
    </subcellularLocation>
    <text evidence="1 2">Mainly localizes in the nucleus, and at low level in the cytosol (By similarity). On chromosomes, enriched on centromeric satellite and LINE DNA repeat elements. Exported from the nucleus to the cytosol in a XPO1/CRM1 via the nuclear export signal in response to DNA stimulation (By similarity). Outside the nucleus, localizes at the cell membrane as a peripheral membrane protein in resting conditions: association to the cell membrane is mediated via binding to phosphatidylinositol 4,5-bisphosphate (PtdIns(4,5)P2) (By similarity). Localization at the cell membrane is required to limit the recognition of self-DNA. Following detection of double-stranded DNA (dsDNA), released from the cell membrane into the cytosol in order to signal. Upon transfection with dsDNA forms punctate structures that co-localize with DNA and Beclin-1 (BECN1). Phosphorylation at Tyr-190 promotes cytosolic retention. In response to translation stress, translocates to the cytosol and associates with collided ribosomes (By similarity).</text>
</comment>
<comment type="domain">
    <text evidence="1 2">The N-terminal disordered part (1-134) binds unspecifically dsDNA and expands the binding and moving range of CGAS on dsDNA (By similarity). The disordered and positively charged residues enhance CGAS-DNA phase separation by increasing the valencies of DNA-binding. The N-terminus is required to sense chromatin and its phosphorylation blocks its activation by chromatin DNA (By similarity). When the N-terminal part (1-134) is missing the protein bound to dsDNA homodimerizes (By similarity).</text>
</comment>
<comment type="domain">
    <text evidence="1">The arginine-anchor tightly binds to the canonical H2A acidic-patch residues.</text>
</comment>
<comment type="PTM">
    <text evidence="1 2">The N-terminal disordered part (1-134) is phosphorylated by AURKB during the G2-M transition, blocking CGAS liquid phase separation and preventing activation. Phosphorylation at Tyr-190 by BLK promotes cytosolic retention. Localizes into the nucleus following dephosphorylation at Tyr-190 (By similarity). Phosphorylation at Ser-410 activates the nucleotidyltransferase activity. Dephosphorylation at Ser-410 by PPP6C impairs its ability to bind GTP, thereby inactivating it (By similarity). Phosphorylation at Ser-188 by PRKDC inhibits its cyclic GMP-AMP synthase activity by impairing homodimerization and activation (By similarity). Phosphorylation at Ser-278 by AKT (AKT1, AKT2 or AKT3) suppresses the nucleotidyltransferase activity. Phosphorylation at Ser-278 by CDK1 during mitosis leads to its inhibition, thereby preventing CGAS activation by self-DNA during mitosis. Dephosphorylated at Ser-278 by protein phosphatase PP1 upon mitotic exit (By similarity).</text>
</comment>
<comment type="PTM">
    <text evidence="1 2">Ubiquitinated at Lys-389 via 'Lys-48'-linked polyubiquitin chains, leading to its SQSTM1-mediated autophagic degradation. Interaction with TRIM14 promotes recruitment of USP14, leading to deubiquitinate Lys-389 and stabilize CGAS. Ubiquitinated at Lys-359 by RNF185 via 'Lys-27'-linked polyubiquitination, promoting CGAS cyclic GMP-AMP synthase activity (By similarity). Monoubiquitination at Lys-322 by TRIM56 promotes oligomerization and subsequent activation (By similarity). Monoubiquitination by TRIM41 promotes CGAS activation (By similarity). Ubiquitination at Lys-260 via 'Lys-48'-linked polyubiquitination promotes its degradation. Deubiquitination at Lys-260 by USP29 promotes its stabilization. Deubiquitinated by USP27X, promoting its stabilization (By similarity). Ubiquitinated at Lys-386 via 'Lys-63'-linked polyubiquitin chains by MARCHF8, leading to the inhibition of its DNA binding ability (By similarity). In cycling cells, nucleosome-bound CGAS is ubiquitinated at Lys-396 and Lys-397 via 'Lys-48'-linked polyubiquitin chains by the ECS(SPSB3) complex, leading to its degradation: ubiquitination and degradation of nuclear CGAS during G1 and G2 phases is required to promote low intranuclear CGAS abundance before the next mitotic cycle (By similarity).</text>
</comment>
<comment type="PTM">
    <text evidence="1">Sumoylated at Lys-206 by TRIM38 in uninfected cells and during the early phase of viral infection, promoting its stability by preventing ubiquitination at Lys-260 and subsequent degradation. Desumoylated by SENP2 during the late phase of viral infection. Sumoylation at Lys-322, Lys-359 and Lys-369 prevents DNA-binding, oligomerization and nucleotidyltransferase activity. Desumoylation at Lys-322, Lys-359 and Lys-369 by SENP7 relieves inhibition and activates CGAS.</text>
</comment>
<comment type="PTM">
    <text evidence="1">Polyglutamylated by TTLL6 at Glu-261, leading to impair DNA-binding activity. Deglutamylated by AGBL5/CCP5 and AGBL6/CCP6.</text>
</comment>
<comment type="PTM">
    <text evidence="2">Acetylation at Lys-359, Lys-369 and Lys-389 inhibits the cyclic GMP-AMP synthase activity. Deacetylated upon cytosolic DNA challenge such as viral infections. Acetylation by KAT5 increases the cyclic GMP-AMP synthase activity by promoting DNA-binding and subsequent activation.</text>
</comment>
<comment type="PTM">
    <text evidence="1">Proteolytically cleaved by apoptotic caspases during apoptosis, leading to its inactivation. The damage of the nucleus and the mitochondria during apoptosis leads to leakage of nuclear and mitochondrial DNA, which activate CGAS: cleavage and inactivation during apoptosis in required to prevent cytokine overproduction. Cleaved by CASP7 and CASP3 during virus-induced apoptosis, thereby inactivating it and preventing cytokine overproduction. Cleaved by CASP1 upon DNA virus infection; the cleavage impairs cGAMP production. Also cleaved by the pyroptotic CASP4 during non-canonical inflammasome activation; does not cut at the same sites than CASP1.</text>
</comment>
<comment type="PTM">
    <text evidence="2">Degraded via selective autophagy following interaction with IRGM. IRGM promotes CGAS recruitment to autophagosome membranes, promoting its SQSTM1/p62-dependent autophagic degradation.</text>
</comment>
<comment type="PTM">
    <text evidence="2">Poly-ADP-ribosylation at Glu-165 by PARP1 impairs DNA-binding, thereby preventing the cyclic GMP-AMP synthase activity.</text>
</comment>
<comment type="PTM">
    <text evidence="2">Palmitoylation at Cys-449 by ZDHHC18 impairs DNA-binding, thereby preventing the cyclic GMP-AMP synthase activity (By similarity). Palmitoylation at Cys-379 and Cys-380 by ZDHHC9 promotes homodimerization and cyclic GMP-AMP synthase activity (By similarity). Depalmitoylation at Cys-379 and Cys-380 by LYPLAL1 impairs homodimerization and cyclic GMP-AMP synthase activity (By similarity).</text>
</comment>
<comment type="PTM">
    <text evidence="1">Monomethylated at Lys-481 by SETD7 (By similarity). Monomethylation promotes interaction with SGF29, preventing interaction between PARP1 nad SGF29. Demethylation by RIOX1 promotes interaction with PARP1, followed by PARP1 inactivation (By similarity).</text>
</comment>
<comment type="PTM">
    <text evidence="1">Lactylation by AARS2 prevents ability to undergo liquid-liquid phase separation (LLPS), thereby inhibiting CGAS activation.</text>
</comment>
<comment type="similarity">
    <text evidence="5">Belongs to the mab-21 family.</text>
</comment>
<proteinExistence type="evidence at protein level"/>
<name>CGAS_PIG</name>
<accession>I3LM39</accession>
<gene>
    <name evidence="2" type="primary">CGAS</name>
    <name evidence="2" type="synonym">MB21D1</name>
</gene>
<protein>
    <recommendedName>
        <fullName evidence="2">Cyclic GMP-AMP synthase</fullName>
        <shortName evidence="2">cGAMP synthase</shortName>
        <shortName evidence="2">cGAS</shortName>
        <ecNumber evidence="4">2.7.7.86</ecNumber>
    </recommendedName>
    <alternativeName>
        <fullName evidence="2">2'3'-cGAMP synthase</fullName>
    </alternativeName>
    <alternativeName>
        <fullName evidence="2">Mab-21 domain-containing protein 1</fullName>
    </alternativeName>
</protein>
<evidence type="ECO:0000250" key="1">
    <source>
        <dbReference type="UniProtKB" id="Q8C6L5"/>
    </source>
</evidence>
<evidence type="ECO:0000250" key="2">
    <source>
        <dbReference type="UniProtKB" id="Q8N884"/>
    </source>
</evidence>
<evidence type="ECO:0000256" key="3">
    <source>
        <dbReference type="SAM" id="MobiDB-lite"/>
    </source>
</evidence>
<evidence type="ECO:0000269" key="4">
    <source>
    </source>
</evidence>
<evidence type="ECO:0000305" key="5"/>
<evidence type="ECO:0000305" key="6">
    <source>
    </source>
</evidence>
<evidence type="ECO:0007829" key="7">
    <source>
        <dbReference type="PDB" id="4JLX"/>
    </source>
</evidence>
<evidence type="ECO:0007829" key="8">
    <source>
        <dbReference type="PDB" id="4JLZ"/>
    </source>
</evidence>
<reference key="1">
    <citation type="submission" date="2009-11" db="EMBL/GenBank/DDBJ databases">
        <authorList>
            <consortium name="Porcine genome sequencing project"/>
        </authorList>
    </citation>
    <scope>NUCLEOTIDE SEQUENCE [LARGE SCALE GENOMIC DNA]</scope>
</reference>
<reference key="2">
    <citation type="journal article" date="2013" name="Nature">
        <title>Structural mechanism of cytosolic DNA sensing by cGAS.</title>
        <authorList>
            <person name="Civril F."/>
            <person name="Deimling T."/>
            <person name="de Oliveira Mann C.C."/>
            <person name="Ablasser A."/>
            <person name="Moldt M."/>
            <person name="Witte G."/>
            <person name="Hornung V."/>
            <person name="Hopfner K.P."/>
        </authorList>
    </citation>
    <scope>X-RAY CRYSTALLOGRAPHY (2.0 ANGSTROMS) OF 135-495 IN COMPLEXES WITH MAGNESIUM IONS</scope>
    <scope>ZINC IONS; ATP; GTP; UTP AND DNA</scope>
    <scope>COFACTOR</scope>
    <scope>FUNCTION</scope>
    <scope>CATALYTIC ACTIVITY</scope>
    <scope>ACTIVITY REGULATION</scope>
    <scope>DNA-BINDING</scope>
    <scope>MUTAGENESIS OF GLU-200 AND ASP-202</scope>
</reference>
<organism>
    <name type="scientific">Sus scrofa</name>
    <name type="common">Pig</name>
    <dbReference type="NCBI Taxonomy" id="9823"/>
    <lineage>
        <taxon>Eukaryota</taxon>
        <taxon>Metazoa</taxon>
        <taxon>Chordata</taxon>
        <taxon>Craniata</taxon>
        <taxon>Vertebrata</taxon>
        <taxon>Euteleostomi</taxon>
        <taxon>Mammalia</taxon>
        <taxon>Eutheria</taxon>
        <taxon>Laurasiatheria</taxon>
        <taxon>Artiodactyla</taxon>
        <taxon>Suina</taxon>
        <taxon>Suidae</taxon>
        <taxon>Sus</taxon>
    </lineage>
</organism>
<keyword id="KW-0002">3D-structure</keyword>
<keyword id="KW-0007">Acetylation</keyword>
<keyword id="KW-0013">ADP-ribosylation</keyword>
<keyword id="KW-0051">Antiviral defense</keyword>
<keyword id="KW-0067">ATP-binding</keyword>
<keyword id="KW-1003">Cell membrane</keyword>
<keyword id="KW-0158">Chromosome</keyword>
<keyword id="KW-0963">Cytoplasm</keyword>
<keyword id="KW-0227">DNA damage</keyword>
<keyword id="KW-0234">DNA repair</keyword>
<keyword id="KW-0238">DNA-binding</keyword>
<keyword id="KW-0342">GTP-binding</keyword>
<keyword id="KW-0391">Immunity</keyword>
<keyword id="KW-0399">Innate immunity</keyword>
<keyword id="KW-1017">Isopeptide bond</keyword>
<keyword id="KW-0446">Lipid-binding</keyword>
<keyword id="KW-0449">Lipoprotein</keyword>
<keyword id="KW-0460">Magnesium</keyword>
<keyword id="KW-0472">Membrane</keyword>
<keyword id="KW-0479">Metal-binding</keyword>
<keyword id="KW-0488">Methylation</keyword>
<keyword id="KW-0547">Nucleotide-binding</keyword>
<keyword id="KW-0548">Nucleotidyltransferase</keyword>
<keyword id="KW-0539">Nucleus</keyword>
<keyword id="KW-0564">Palmitate</keyword>
<keyword id="KW-0597">Phosphoprotein</keyword>
<keyword id="KW-1185">Reference proteome</keyword>
<keyword id="KW-0808">Transferase</keyword>
<keyword id="KW-0832">Ubl conjugation</keyword>
<keyword id="KW-0862">Zinc</keyword>